<proteinExistence type="inferred from homology"/>
<accession>Q49WD4</accession>
<gene>
    <name type="ordered locus">SSP1780</name>
</gene>
<feature type="chain" id="PRO_0000369674" description="UPF0738 protein SSP1780">
    <location>
        <begin position="1"/>
        <end position="115"/>
    </location>
</feature>
<organism>
    <name type="scientific">Staphylococcus saprophyticus subsp. saprophyticus (strain ATCC 15305 / DSM 20229 / NCIMB 8711 / NCTC 7292 / S-41)</name>
    <dbReference type="NCBI Taxonomy" id="342451"/>
    <lineage>
        <taxon>Bacteria</taxon>
        <taxon>Bacillati</taxon>
        <taxon>Bacillota</taxon>
        <taxon>Bacilli</taxon>
        <taxon>Bacillales</taxon>
        <taxon>Staphylococcaceae</taxon>
        <taxon>Staphylococcus</taxon>
    </lineage>
</organism>
<keyword id="KW-1185">Reference proteome</keyword>
<protein>
    <recommendedName>
        <fullName evidence="1">UPF0738 protein SSP1780</fullName>
    </recommendedName>
</protein>
<reference key="1">
    <citation type="journal article" date="2005" name="Proc. Natl. Acad. Sci. U.S.A.">
        <title>Whole genome sequence of Staphylococcus saprophyticus reveals the pathogenesis of uncomplicated urinary tract infection.</title>
        <authorList>
            <person name="Kuroda M."/>
            <person name="Yamashita A."/>
            <person name="Hirakawa H."/>
            <person name="Kumano M."/>
            <person name="Morikawa K."/>
            <person name="Higashide M."/>
            <person name="Maruyama A."/>
            <person name="Inose Y."/>
            <person name="Matoba K."/>
            <person name="Toh H."/>
            <person name="Kuhara S."/>
            <person name="Hattori M."/>
            <person name="Ohta T."/>
        </authorList>
    </citation>
    <scope>NUCLEOTIDE SEQUENCE [LARGE SCALE GENOMIC DNA]</scope>
    <source>
        <strain>ATCC 15305 / DSM 20229 / NCIMB 8711 / NCTC 7292 / S-41</strain>
    </source>
</reference>
<sequence>MRIYVNEIKVTEDSINCYTEQSTEGLQEAGQMLVDSDNYSFAYILDDGQSYSYLIFVQETWSMLYENKGKKLIINDELELKQFENEFNYILDNIQGNSNYGKEFVSVVENTFELD</sequence>
<comment type="similarity">
    <text evidence="1">Belongs to the UPF0738 family.</text>
</comment>
<evidence type="ECO:0000255" key="1">
    <source>
        <dbReference type="HAMAP-Rule" id="MF_01861"/>
    </source>
</evidence>
<dbReference type="EMBL" id="AP008934">
    <property type="protein sequence ID" value="BAE18925.1"/>
    <property type="molecule type" value="Genomic_DNA"/>
</dbReference>
<dbReference type="RefSeq" id="WP_011303482.1">
    <property type="nucleotide sequence ID" value="NC_007350.1"/>
</dbReference>
<dbReference type="GeneID" id="3615407"/>
<dbReference type="KEGG" id="ssp:SSP1780"/>
<dbReference type="PATRIC" id="fig|342451.11.peg.1776"/>
<dbReference type="eggNOG" id="ENOG5032YMN">
    <property type="taxonomic scope" value="Bacteria"/>
</dbReference>
<dbReference type="HOGENOM" id="CLU_142282_0_0_9"/>
<dbReference type="OrthoDB" id="2966478at2"/>
<dbReference type="Proteomes" id="UP000006371">
    <property type="component" value="Chromosome"/>
</dbReference>
<dbReference type="HAMAP" id="MF_01861">
    <property type="entry name" value="UPF0738"/>
    <property type="match status" value="1"/>
</dbReference>
<dbReference type="InterPro" id="IPR020908">
    <property type="entry name" value="UPF0738"/>
</dbReference>
<dbReference type="Pfam" id="PF19785">
    <property type="entry name" value="UPF0738"/>
    <property type="match status" value="1"/>
</dbReference>
<name>Y1780_STAS1</name>